<organism evidence="9">
    <name type="scientific">Gallus gallus</name>
    <name type="common">Chicken</name>
    <dbReference type="NCBI Taxonomy" id="9031"/>
    <lineage>
        <taxon>Eukaryota</taxon>
        <taxon>Metazoa</taxon>
        <taxon>Chordata</taxon>
        <taxon>Craniata</taxon>
        <taxon>Vertebrata</taxon>
        <taxon>Euteleostomi</taxon>
        <taxon>Archelosauria</taxon>
        <taxon>Archosauria</taxon>
        <taxon>Dinosauria</taxon>
        <taxon>Saurischia</taxon>
        <taxon>Theropoda</taxon>
        <taxon>Coelurosauria</taxon>
        <taxon>Aves</taxon>
        <taxon>Neognathae</taxon>
        <taxon>Galloanserae</taxon>
        <taxon>Galliformes</taxon>
        <taxon>Phasianidae</taxon>
        <taxon>Phasianinae</taxon>
        <taxon>Gallus</taxon>
    </lineage>
</organism>
<evidence type="ECO:0000250" key="1"/>
<evidence type="ECO:0000250" key="2">
    <source>
        <dbReference type="UniProtKB" id="P43235"/>
    </source>
</evidence>
<evidence type="ECO:0000255" key="3"/>
<evidence type="ECO:0000255" key="4">
    <source>
        <dbReference type="PROSITE-ProRule" id="PRU10088"/>
    </source>
</evidence>
<evidence type="ECO:0000255" key="5">
    <source>
        <dbReference type="PROSITE-ProRule" id="PRU10089"/>
    </source>
</evidence>
<evidence type="ECO:0000255" key="6">
    <source>
        <dbReference type="PROSITE-ProRule" id="PRU10090"/>
    </source>
</evidence>
<evidence type="ECO:0000269" key="7">
    <source>
    </source>
</evidence>
<evidence type="ECO:0000305" key="8"/>
<evidence type="ECO:0000312" key="9">
    <source>
        <dbReference type="EMBL" id="AAC59739.1"/>
    </source>
</evidence>
<dbReference type="EC" id="3.4.22.38"/>
<dbReference type="EMBL" id="U37691">
    <property type="protein sequence ID" value="AAC59739.1"/>
    <property type="molecule type" value="mRNA"/>
</dbReference>
<dbReference type="SMR" id="Q90686"/>
<dbReference type="FunCoup" id="Q90686">
    <property type="interactions" value="2"/>
</dbReference>
<dbReference type="STRING" id="9031.ENSGALP00000046303"/>
<dbReference type="MEROPS" id="C01.036"/>
<dbReference type="GlyCosmos" id="Q90686">
    <property type="glycosylation" value="1 site, No reported glycans"/>
</dbReference>
<dbReference type="GlyGen" id="Q90686">
    <property type="glycosylation" value="1 site"/>
</dbReference>
<dbReference type="PaxDb" id="9031-ENSGALP00000043433"/>
<dbReference type="VEuPathDB" id="HostDB:geneid_395818"/>
<dbReference type="eggNOG" id="KOG1543">
    <property type="taxonomic scope" value="Eukaryota"/>
</dbReference>
<dbReference type="InParanoid" id="Q90686"/>
<dbReference type="OrthoDB" id="65740at2759"/>
<dbReference type="PhylomeDB" id="Q90686"/>
<dbReference type="Proteomes" id="UP000000539">
    <property type="component" value="Unassembled WGS sequence"/>
</dbReference>
<dbReference type="GO" id="GO:0005615">
    <property type="term" value="C:extracellular space"/>
    <property type="evidence" value="ECO:0000318"/>
    <property type="project" value="GO_Central"/>
</dbReference>
<dbReference type="GO" id="GO:0005764">
    <property type="term" value="C:lysosome"/>
    <property type="evidence" value="ECO:0000318"/>
    <property type="project" value="GO_Central"/>
</dbReference>
<dbReference type="GO" id="GO:0004197">
    <property type="term" value="F:cysteine-type endopeptidase activity"/>
    <property type="evidence" value="ECO:0000318"/>
    <property type="project" value="GO_Central"/>
</dbReference>
<dbReference type="GO" id="GO:0051603">
    <property type="term" value="P:proteolysis involved in protein catabolic process"/>
    <property type="evidence" value="ECO:0000318"/>
    <property type="project" value="GO_Central"/>
</dbReference>
<dbReference type="CDD" id="cd02248">
    <property type="entry name" value="Peptidase_C1A"/>
    <property type="match status" value="1"/>
</dbReference>
<dbReference type="FunFam" id="3.90.70.10:FF:000006">
    <property type="entry name" value="Cathepsin S"/>
    <property type="match status" value="1"/>
</dbReference>
<dbReference type="Gene3D" id="3.90.70.10">
    <property type="entry name" value="Cysteine proteinases"/>
    <property type="match status" value="1"/>
</dbReference>
<dbReference type="InterPro" id="IPR038765">
    <property type="entry name" value="Papain-like_cys_pep_sf"/>
</dbReference>
<dbReference type="InterPro" id="IPR025661">
    <property type="entry name" value="Pept_asp_AS"/>
</dbReference>
<dbReference type="InterPro" id="IPR000169">
    <property type="entry name" value="Pept_cys_AS"/>
</dbReference>
<dbReference type="InterPro" id="IPR025660">
    <property type="entry name" value="Pept_his_AS"/>
</dbReference>
<dbReference type="InterPro" id="IPR013128">
    <property type="entry name" value="Peptidase_C1A"/>
</dbReference>
<dbReference type="InterPro" id="IPR000668">
    <property type="entry name" value="Peptidase_C1A_C"/>
</dbReference>
<dbReference type="InterPro" id="IPR039417">
    <property type="entry name" value="Peptidase_C1A_papain-like"/>
</dbReference>
<dbReference type="PANTHER" id="PTHR12411">
    <property type="entry name" value="CYSTEINE PROTEASE FAMILY C1-RELATED"/>
    <property type="match status" value="1"/>
</dbReference>
<dbReference type="Pfam" id="PF00112">
    <property type="entry name" value="Peptidase_C1"/>
    <property type="match status" value="1"/>
</dbReference>
<dbReference type="PRINTS" id="PR00705">
    <property type="entry name" value="PAPAIN"/>
</dbReference>
<dbReference type="SMART" id="SM00645">
    <property type="entry name" value="Pept_C1"/>
    <property type="match status" value="1"/>
</dbReference>
<dbReference type="SUPFAM" id="SSF54001">
    <property type="entry name" value="Cysteine proteinases"/>
    <property type="match status" value="1"/>
</dbReference>
<dbReference type="PROSITE" id="PS00640">
    <property type="entry name" value="THIOL_PROTEASE_ASN"/>
    <property type="match status" value="1"/>
</dbReference>
<dbReference type="PROSITE" id="PS00139">
    <property type="entry name" value="THIOL_PROTEASE_CYS"/>
    <property type="match status" value="1"/>
</dbReference>
<dbReference type="PROSITE" id="PS00639">
    <property type="entry name" value="THIOL_PROTEASE_HIS"/>
    <property type="match status" value="1"/>
</dbReference>
<name>CATK_CHICK</name>
<protein>
    <recommendedName>
        <fullName>Cathepsin K</fullName>
        <ecNumber>3.4.22.38</ecNumber>
    </recommendedName>
    <alternativeName>
        <fullName>JTAP-1</fullName>
    </alternativeName>
</protein>
<proteinExistence type="evidence at transcript level"/>
<feature type="signal peptide" evidence="3">
    <location>
        <begin position="1"/>
        <end position="19"/>
    </location>
</feature>
<feature type="propeptide" id="PRO_0000026309" description="Activation peptide">
    <location>
        <begin position="20"/>
        <end position="119"/>
    </location>
</feature>
<feature type="chain" id="PRO_0000026310" description="Cathepsin K">
    <location>
        <begin position="120"/>
        <end position="334"/>
    </location>
</feature>
<feature type="active site" evidence="1">
    <location>
        <position position="144"/>
    </location>
</feature>
<feature type="active site" evidence="1">
    <location>
        <position position="281"/>
    </location>
</feature>
<feature type="active site" evidence="1">
    <location>
        <position position="301"/>
    </location>
</feature>
<feature type="glycosylation site" description="N-linked (GlcNAc...) asparagine" evidence="3">
    <location>
        <position position="108"/>
    </location>
</feature>
<feature type="disulfide bond" evidence="1">
    <location>
        <begin position="141"/>
        <end position="182"/>
    </location>
</feature>
<feature type="disulfide bond" evidence="1">
    <location>
        <begin position="175"/>
        <end position="215"/>
    </location>
</feature>
<feature type="disulfide bond" evidence="1">
    <location>
        <begin position="274"/>
        <end position="323"/>
    </location>
</feature>
<reference evidence="8" key="1">
    <citation type="journal article" date="1996" name="Oncogene">
        <title>Isolation and cloning of JTAP-1: a cathepsin like gene upregulated in response to V-Jun induced cell transformation.</title>
        <authorList>
            <person name="Hadman M."/>
            <person name="Gabos L."/>
            <person name="Loo M."/>
            <person name="Sehgal A."/>
            <person name="Bos T.J."/>
        </authorList>
    </citation>
    <scope>NUCLEOTIDE SEQUENCE [MRNA]</scope>
    <scope>INDUCTION</scope>
</reference>
<gene>
    <name type="primary">CTSK</name>
</gene>
<accession>Q90686</accession>
<sequence length="334" mass="37219">MLRLHWLALLVLLLPMAAAQLRPEPELDAQWDLWKRTIQKAVQRQGGRNVPEVDLGEEPEVHRCPQRGARLGKHSFQLAMNYLGDMTSEEVVRTMTGLRVPRSRPRPNGTLYVPDWSSRAPAAVDWRRKGYVTPVKDQGQCGSCWAFSSVGALEGQLKRRTGKLLSLSPQNLVYCVSNNNGCGGGYMTNAFEYVRLNRGIDSEDAYPYIGQDESCMYSPTGKAAKCRGYREIPEDNEKALKRAVARIGPVSVGIDASLPSFQFYSRGVYYDTGCNPENINHAVLAVGYGAQKGTKHWIIKNSWGTEWGNKGYVLLARNMKQTCGIANLASFPKM</sequence>
<keyword id="KW-1015">Disulfide bond</keyword>
<keyword id="KW-0325">Glycoprotein</keyword>
<keyword id="KW-0378">Hydrolase</keyword>
<keyword id="KW-0645">Protease</keyword>
<keyword id="KW-1185">Reference proteome</keyword>
<keyword id="KW-0732">Signal</keyword>
<keyword id="KW-0788">Thiol protease</keyword>
<keyword id="KW-0865">Zymogen</keyword>
<comment type="function">
    <text evidence="2">Closely involved in osteoclastic bone resorption and may participate partially in the disorder of bone remodeling. Displays potent endoprotease activity against fibrinogen at acid pH. May play an important role in extracellular matrix degradation (By similarity).</text>
</comment>
<comment type="catalytic activity">
    <reaction evidence="2">
        <text>Broad proteolytic activity. With small-molecule substrates and inhibitors, the major determinant of specificity is P2, which is preferably Leu, Met &gt; Phe, and not Arg.</text>
        <dbReference type="EC" id="3.4.22.38"/>
    </reaction>
</comment>
<comment type="induction">
    <text evidence="7">Up-regulated in response to V-Jun induced cell transformation.</text>
</comment>
<comment type="similarity">
    <text evidence="4 5 6">Belongs to the peptidase C1 family.</text>
</comment>